<sequence length="312" mass="34826">MGSNITSTSIIFLLTGVPGLEAFHTWISIPFCFLSVTALLGNSLILFATITQPSLHEPMYYFLSMLSATDLGLSISTLVTMLSIFWFNVREISFNACLSHMFFIKFFTVMESSVLLAMAFDRFVAVSNPLRYAMILTDSRIAQIGVASVIRGLLMLTPMVALLIRLSYCHSQVLHHSYCYHPDVMKLSCTDTRINSAVGLTAMFSTVGVDLLLILLSYVLIIRTVLSVASPEERKETFSTCVSHIVAFAIYYIPLISLSIVHRFGKQAPAYVHTMIANTYLLISPLMNPVIYSVKTKQIRRAVIKILHSKET</sequence>
<feature type="chain" id="PRO_0000461683" description="Olfactory receptor OR51C1">
    <location>
        <begin position="1"/>
        <end position="312"/>
    </location>
</feature>
<feature type="topological domain" description="Extracellular" evidence="3">
    <location>
        <begin position="1"/>
        <end position="26"/>
    </location>
</feature>
<feature type="transmembrane region" description="Helical; Name=1" evidence="1">
    <location>
        <begin position="27"/>
        <end position="47"/>
    </location>
</feature>
<feature type="topological domain" description="Cytoplasmic" evidence="3">
    <location>
        <begin position="48"/>
        <end position="66"/>
    </location>
</feature>
<feature type="transmembrane region" description="Helical; Name=2" evidence="1">
    <location>
        <begin position="67"/>
        <end position="87"/>
    </location>
</feature>
<feature type="topological domain" description="Extracellular" evidence="3">
    <location>
        <begin position="88"/>
        <end position="99"/>
    </location>
</feature>
<feature type="transmembrane region" description="Helical; Name=3" evidence="1">
    <location>
        <begin position="100"/>
        <end position="120"/>
    </location>
</feature>
<feature type="topological domain" description="Cytoplasmic" evidence="3">
    <location>
        <begin position="121"/>
        <end position="143"/>
    </location>
</feature>
<feature type="transmembrane region" description="Helical; Name=4" evidence="1">
    <location>
        <begin position="144"/>
        <end position="164"/>
    </location>
</feature>
<feature type="topological domain" description="Extracellular" evidence="3">
    <location>
        <begin position="165"/>
        <end position="201"/>
    </location>
</feature>
<feature type="transmembrane region" description="Helical; Name=5" evidence="1">
    <location>
        <begin position="202"/>
        <end position="222"/>
    </location>
</feature>
<feature type="topological domain" description="Cytoplasmic" evidence="3">
    <location>
        <begin position="223"/>
        <end position="240"/>
    </location>
</feature>
<feature type="transmembrane region" description="Helical; Name=6" evidence="1">
    <location>
        <begin position="241"/>
        <end position="261"/>
    </location>
</feature>
<feature type="topological domain" description="Extracellular" evidence="3">
    <location>
        <begin position="262"/>
        <end position="273"/>
    </location>
</feature>
<feature type="transmembrane region" description="Helical; Name=7" evidence="1">
    <location>
        <begin position="274"/>
        <end position="294"/>
    </location>
</feature>
<feature type="topological domain" description="Cytoplasmic" evidence="3">
    <location>
        <begin position="295"/>
        <end position="312"/>
    </location>
</feature>
<feature type="disulfide bond" evidence="2">
    <location>
        <begin position="97"/>
        <end position="179"/>
    </location>
</feature>
<feature type="sequence conflict" description="In Ref. 3; BAC05769." evidence="3" ref="3">
    <original>GS</original>
    <variation>TN</variation>
    <location>
        <begin position="2"/>
        <end position="3"/>
    </location>
</feature>
<protein>
    <recommendedName>
        <fullName evidence="4">Olfactory receptor OR51C1</fullName>
    </recommendedName>
</protein>
<keyword id="KW-1015">Disulfide bond</keyword>
<keyword id="KW-0297">G-protein coupled receptor</keyword>
<keyword id="KW-0472">Membrane</keyword>
<keyword id="KW-0552">Olfaction</keyword>
<keyword id="KW-0675">Receptor</keyword>
<keyword id="KW-1185">Reference proteome</keyword>
<keyword id="KW-0716">Sensory transduction</keyword>
<keyword id="KW-0807">Transducer</keyword>
<keyword id="KW-0812">Transmembrane</keyword>
<keyword id="KW-1133">Transmembrane helix</keyword>
<dbReference type="EMBL" id="AB065521">
    <property type="protein sequence ID" value="BAC05769.1"/>
    <property type="molecule type" value="Genomic_DNA"/>
</dbReference>
<dbReference type="EMBL" id="AC090719">
    <property type="status" value="NOT_ANNOTATED_CDS"/>
    <property type="molecule type" value="Genomic_DNA"/>
</dbReference>
<dbReference type="EMBL" id="CH471064">
    <property type="protein sequence ID" value="EAW68830.1"/>
    <property type="molecule type" value="Genomic_DNA"/>
</dbReference>
<dbReference type="CCDS" id="CCDS91423.1"/>
<dbReference type="RefSeq" id="NP_001382980.1">
    <property type="nucleotide sequence ID" value="NM_001396051.1"/>
</dbReference>
<dbReference type="SMR" id="A0A3B3IT45"/>
<dbReference type="FunCoup" id="A0A3B3IT45">
    <property type="interactions" value="793"/>
</dbReference>
<dbReference type="Ensembl" id="ENST00000641159.2">
    <property type="protein sequence ID" value="ENSP00000497734.1"/>
    <property type="gene ID" value="ENSG00000197674.8"/>
</dbReference>
<dbReference type="GeneID" id="401661"/>
<dbReference type="MANE-Select" id="ENST00000641159.2">
    <property type="protein sequence ID" value="ENSP00000497734.1"/>
    <property type="RefSeq nucleotide sequence ID" value="NM_001396051.1"/>
    <property type="RefSeq protein sequence ID" value="NP_001382980.1"/>
</dbReference>
<dbReference type="AGR" id="HGNC:15191"/>
<dbReference type="GeneCards" id="OR51C1"/>
<dbReference type="HGNC" id="HGNC:15191">
    <property type="gene designation" value="OR51C1"/>
</dbReference>
<dbReference type="OpenTargets" id="ENSG00000197674"/>
<dbReference type="VEuPathDB" id="HostDB:ENSG00000197674"/>
<dbReference type="GeneTree" id="ENSGT01130000278299"/>
<dbReference type="OMA" id="HHSYCYH"/>
<dbReference type="OrthoDB" id="9444602at2759"/>
<dbReference type="PAN-GO" id="A0A3B3IT45">
    <property type="GO annotations" value="2 GO annotations based on evolutionary models"/>
</dbReference>
<dbReference type="TreeFam" id="TF342735"/>
<dbReference type="Proteomes" id="UP000005640">
    <property type="component" value="Chromosome 11"/>
</dbReference>
<dbReference type="Bgee" id="ENSG00000197674">
    <property type="expression patterns" value="Expressed in male germ line stem cell (sensu Vertebrata) in testis and 10 other cell types or tissues"/>
</dbReference>
<dbReference type="GO" id="GO:0005886">
    <property type="term" value="C:plasma membrane"/>
    <property type="evidence" value="ECO:0000318"/>
    <property type="project" value="GO_Central"/>
</dbReference>
<dbReference type="GO" id="GO:0004930">
    <property type="term" value="F:G protein-coupled receptor activity"/>
    <property type="evidence" value="ECO:0007669"/>
    <property type="project" value="UniProtKB-KW"/>
</dbReference>
<dbReference type="GO" id="GO:0004984">
    <property type="term" value="F:olfactory receptor activity"/>
    <property type="evidence" value="ECO:0000318"/>
    <property type="project" value="GO_Central"/>
</dbReference>
<dbReference type="CDD" id="cd15222">
    <property type="entry name" value="7tmA_OR51-like"/>
    <property type="match status" value="1"/>
</dbReference>
<dbReference type="FunFam" id="1.20.1070.10:FF:000002">
    <property type="entry name" value="Olfactory receptor"/>
    <property type="match status" value="1"/>
</dbReference>
<dbReference type="Gene3D" id="1.20.1070.10">
    <property type="entry name" value="Rhodopsin 7-helix transmembrane proteins"/>
    <property type="match status" value="1"/>
</dbReference>
<dbReference type="InterPro" id="IPR000276">
    <property type="entry name" value="GPCR_Rhodpsn"/>
</dbReference>
<dbReference type="InterPro" id="IPR017452">
    <property type="entry name" value="GPCR_Rhodpsn_7TM"/>
</dbReference>
<dbReference type="InterPro" id="IPR000725">
    <property type="entry name" value="Olfact_rcpt"/>
</dbReference>
<dbReference type="InterPro" id="IPR050402">
    <property type="entry name" value="OR51/52/56-like"/>
</dbReference>
<dbReference type="PANTHER" id="PTHR26450:SF408">
    <property type="entry name" value="OLFACTORY RECEPTOR"/>
    <property type="match status" value="1"/>
</dbReference>
<dbReference type="PANTHER" id="PTHR26450">
    <property type="entry name" value="OLFACTORY RECEPTOR 56B1-RELATED"/>
    <property type="match status" value="1"/>
</dbReference>
<dbReference type="Pfam" id="PF13853">
    <property type="entry name" value="7tm_4"/>
    <property type="match status" value="1"/>
</dbReference>
<dbReference type="PRINTS" id="PR00237">
    <property type="entry name" value="GPCRRHODOPSN"/>
</dbReference>
<dbReference type="PRINTS" id="PR00245">
    <property type="entry name" value="OLFACTORYR"/>
</dbReference>
<dbReference type="SMART" id="SM01381">
    <property type="entry name" value="7TM_GPCR_Srsx"/>
    <property type="match status" value="1"/>
</dbReference>
<dbReference type="SUPFAM" id="SSF81321">
    <property type="entry name" value="Family A G protein-coupled receptor-like"/>
    <property type="match status" value="1"/>
</dbReference>
<dbReference type="PROSITE" id="PS00237">
    <property type="entry name" value="G_PROTEIN_RECEP_F1_1"/>
    <property type="match status" value="1"/>
</dbReference>
<dbReference type="PROSITE" id="PS50262">
    <property type="entry name" value="G_PROTEIN_RECEP_F1_2"/>
    <property type="match status" value="1"/>
</dbReference>
<proteinExistence type="inferred from homology"/>
<accession>A0A3B3IT45</accession>
<accession>Q8NH68</accession>
<gene>
    <name evidence="4" type="primary">OR51C1</name>
    <name evidence="4" type="synonym">OR51C1P</name>
    <name type="synonym">OR51C3P</name>
    <name type="synonym">OST734</name>
</gene>
<organism>
    <name type="scientific">Homo sapiens</name>
    <name type="common">Human</name>
    <dbReference type="NCBI Taxonomy" id="9606"/>
    <lineage>
        <taxon>Eukaryota</taxon>
        <taxon>Metazoa</taxon>
        <taxon>Chordata</taxon>
        <taxon>Craniata</taxon>
        <taxon>Vertebrata</taxon>
        <taxon>Euteleostomi</taxon>
        <taxon>Mammalia</taxon>
        <taxon>Eutheria</taxon>
        <taxon>Euarchontoglires</taxon>
        <taxon>Primates</taxon>
        <taxon>Haplorrhini</taxon>
        <taxon>Catarrhini</taxon>
        <taxon>Hominidae</taxon>
        <taxon>Homo</taxon>
    </lineage>
</organism>
<name>O51C1_HUMAN</name>
<comment type="function">
    <text evidence="3">Odorant receptor.</text>
</comment>
<comment type="subcellular location">
    <subcellularLocation>
        <location evidence="3">Membrane</location>
        <topology evidence="1">Multi-pass membrane protein</topology>
    </subcellularLocation>
</comment>
<comment type="similarity">
    <text evidence="3">Belongs to the G-protein coupled receptor 1 family.</text>
</comment>
<reference key="1">
    <citation type="journal article" date="2006" name="Nature">
        <title>Human chromosome 11 DNA sequence and analysis including novel gene identification.</title>
        <authorList>
            <person name="Taylor T.D."/>
            <person name="Noguchi H."/>
            <person name="Totoki Y."/>
            <person name="Toyoda A."/>
            <person name="Kuroki Y."/>
            <person name="Dewar K."/>
            <person name="Lloyd C."/>
            <person name="Itoh T."/>
            <person name="Takeda T."/>
            <person name="Kim D.-W."/>
            <person name="She X."/>
            <person name="Barlow K.F."/>
            <person name="Bloom T."/>
            <person name="Bruford E."/>
            <person name="Chang J.L."/>
            <person name="Cuomo C.A."/>
            <person name="Eichler E."/>
            <person name="FitzGerald M.G."/>
            <person name="Jaffe D.B."/>
            <person name="LaButti K."/>
            <person name="Nicol R."/>
            <person name="Park H.-S."/>
            <person name="Seaman C."/>
            <person name="Sougnez C."/>
            <person name="Yang X."/>
            <person name="Zimmer A.R."/>
            <person name="Zody M.C."/>
            <person name="Birren B.W."/>
            <person name="Nusbaum C."/>
            <person name="Fujiyama A."/>
            <person name="Hattori M."/>
            <person name="Rogers J."/>
            <person name="Lander E.S."/>
            <person name="Sakaki Y."/>
        </authorList>
    </citation>
    <scope>NUCLEOTIDE SEQUENCE [LARGE SCALE GENOMIC DNA]</scope>
</reference>
<reference key="2">
    <citation type="submission" date="2005-09" db="EMBL/GenBank/DDBJ databases">
        <authorList>
            <person name="Mural R.J."/>
            <person name="Istrail S."/>
            <person name="Sutton G.G."/>
            <person name="Florea L."/>
            <person name="Halpern A.L."/>
            <person name="Mobarry C.M."/>
            <person name="Lippert R."/>
            <person name="Walenz B."/>
            <person name="Shatkay H."/>
            <person name="Dew I."/>
            <person name="Miller J.R."/>
            <person name="Flanigan M.J."/>
            <person name="Edwards N.J."/>
            <person name="Bolanos R."/>
            <person name="Fasulo D."/>
            <person name="Halldorsson B.V."/>
            <person name="Hannenhalli S."/>
            <person name="Turner R."/>
            <person name="Yooseph S."/>
            <person name="Lu F."/>
            <person name="Nusskern D.R."/>
            <person name="Shue B.C."/>
            <person name="Zheng X.H."/>
            <person name="Zhong F."/>
            <person name="Delcher A.L."/>
            <person name="Huson D.H."/>
            <person name="Kravitz S.A."/>
            <person name="Mouchard L."/>
            <person name="Reinert K."/>
            <person name="Remington K.A."/>
            <person name="Clark A.G."/>
            <person name="Waterman M.S."/>
            <person name="Eichler E.E."/>
            <person name="Adams M.D."/>
            <person name="Hunkapiller M.W."/>
            <person name="Myers E.W."/>
            <person name="Venter J.C."/>
        </authorList>
    </citation>
    <scope>NUCLEOTIDE SEQUENCE [LARGE SCALE GENOMIC DNA]</scope>
</reference>
<reference key="3">
    <citation type="submission" date="2001-07" db="EMBL/GenBank/DDBJ databases">
        <title>Genome-wide discovery and analysis of human seven transmembrane helix receptor genes.</title>
        <authorList>
            <person name="Suwa M."/>
            <person name="Sato T."/>
            <person name="Okouchi I."/>
            <person name="Arita M."/>
            <person name="Futami K."/>
            <person name="Matsumoto S."/>
            <person name="Tsutsumi S."/>
            <person name="Aburatani H."/>
            <person name="Asai K."/>
            <person name="Akiyama Y."/>
        </authorList>
    </citation>
    <scope>NUCLEOTIDE SEQUENCE [GENOMIC DNA]</scope>
</reference>
<evidence type="ECO:0000255" key="1"/>
<evidence type="ECO:0000255" key="2">
    <source>
        <dbReference type="PROSITE-ProRule" id="PRU00521"/>
    </source>
</evidence>
<evidence type="ECO:0000305" key="3"/>
<evidence type="ECO:0000312" key="4">
    <source>
        <dbReference type="HGNC" id="HGNC:15191"/>
    </source>
</evidence>